<proteinExistence type="inferred from homology"/>
<organism>
    <name type="scientific">Streptococcus pneumoniae (strain ATCC BAA-255 / R6)</name>
    <dbReference type="NCBI Taxonomy" id="171101"/>
    <lineage>
        <taxon>Bacteria</taxon>
        <taxon>Bacillati</taxon>
        <taxon>Bacillota</taxon>
        <taxon>Bacilli</taxon>
        <taxon>Lactobacillales</taxon>
        <taxon>Streptococcaceae</taxon>
        <taxon>Streptococcus</taxon>
    </lineage>
</organism>
<protein>
    <recommendedName>
        <fullName evidence="1">UPF0473 protein spr0177</fullName>
    </recommendedName>
</protein>
<feature type="chain" id="PRO_0000304858" description="UPF0473 protein spr0177">
    <location>
        <begin position="1"/>
        <end position="101"/>
    </location>
</feature>
<gene>
    <name type="ordered locus">spr0177</name>
</gene>
<reference key="1">
    <citation type="journal article" date="2001" name="J. Bacteriol.">
        <title>Genome of the bacterium Streptococcus pneumoniae strain R6.</title>
        <authorList>
            <person name="Hoskins J."/>
            <person name="Alborn W.E. Jr."/>
            <person name="Arnold J."/>
            <person name="Blaszczak L.C."/>
            <person name="Burgett S."/>
            <person name="DeHoff B.S."/>
            <person name="Estrem S.T."/>
            <person name="Fritz L."/>
            <person name="Fu D.-J."/>
            <person name="Fuller W."/>
            <person name="Geringer C."/>
            <person name="Gilmour R."/>
            <person name="Glass J.S."/>
            <person name="Khoja H."/>
            <person name="Kraft A.R."/>
            <person name="Lagace R.E."/>
            <person name="LeBlanc D.J."/>
            <person name="Lee L.N."/>
            <person name="Lefkowitz E.J."/>
            <person name="Lu J."/>
            <person name="Matsushima P."/>
            <person name="McAhren S.M."/>
            <person name="McHenney M."/>
            <person name="McLeaster K."/>
            <person name="Mundy C.W."/>
            <person name="Nicas T.I."/>
            <person name="Norris F.H."/>
            <person name="O'Gara M."/>
            <person name="Peery R.B."/>
            <person name="Robertson G.T."/>
            <person name="Rockey P."/>
            <person name="Sun P.-M."/>
            <person name="Winkler M.E."/>
            <person name="Yang Y."/>
            <person name="Young-Bellido M."/>
            <person name="Zhao G."/>
            <person name="Zook C.A."/>
            <person name="Baltz R.H."/>
            <person name="Jaskunas S.R."/>
            <person name="Rosteck P.R. Jr."/>
            <person name="Skatrud P.L."/>
            <person name="Glass J.I."/>
        </authorList>
    </citation>
    <scope>NUCLEOTIDE SEQUENCE [LARGE SCALE GENOMIC DNA]</scope>
    <source>
        <strain>ATCC BAA-255 / R6</strain>
    </source>
</reference>
<name>Y177_STRR6</name>
<accession>Q8DRE1</accession>
<sequence>MSHDHNHDHEERELITLVDEQGNETLFEILLTIDGKEEFGKNYVLLVPVNAEEDEDGQVEIQAYSFIENEDGTEGELQPIPEDSEDEWNMIEEVFNSFMEE</sequence>
<keyword id="KW-1185">Reference proteome</keyword>
<dbReference type="EMBL" id="AE007317">
    <property type="protein sequence ID" value="AAK98981.1"/>
    <property type="molecule type" value="Genomic_DNA"/>
</dbReference>
<dbReference type="PIR" id="A97894">
    <property type="entry name" value="A97894"/>
</dbReference>
<dbReference type="PIR" id="E95022">
    <property type="entry name" value="E95022"/>
</dbReference>
<dbReference type="RefSeq" id="NP_357771.1">
    <property type="nucleotide sequence ID" value="NC_003098.1"/>
</dbReference>
<dbReference type="RefSeq" id="WP_000017620.1">
    <property type="nucleotide sequence ID" value="NC_003098.1"/>
</dbReference>
<dbReference type="STRING" id="171101.spr0177"/>
<dbReference type="KEGG" id="spr:spr0177"/>
<dbReference type="PATRIC" id="fig|171101.6.peg.209"/>
<dbReference type="eggNOG" id="COG3906">
    <property type="taxonomic scope" value="Bacteria"/>
</dbReference>
<dbReference type="HOGENOM" id="CLU_146610_2_1_9"/>
<dbReference type="PHI-base" id="PHI:3148"/>
<dbReference type="Proteomes" id="UP000000586">
    <property type="component" value="Chromosome"/>
</dbReference>
<dbReference type="HAMAP" id="MF_01448">
    <property type="entry name" value="UPF0473"/>
    <property type="match status" value="1"/>
</dbReference>
<dbReference type="InterPro" id="IPR009711">
    <property type="entry name" value="UPF0473"/>
</dbReference>
<dbReference type="NCBIfam" id="NF010215">
    <property type="entry name" value="PRK13678.1-2"/>
    <property type="match status" value="1"/>
</dbReference>
<dbReference type="NCBIfam" id="NF010217">
    <property type="entry name" value="PRK13678.1-4"/>
    <property type="match status" value="1"/>
</dbReference>
<dbReference type="PANTHER" id="PTHR40066">
    <property type="entry name" value="UPF0473 PROTEIN CBO2561/CLC_2432"/>
    <property type="match status" value="1"/>
</dbReference>
<dbReference type="PANTHER" id="PTHR40066:SF1">
    <property type="entry name" value="UPF0473 PROTEIN CBO2561_CLC_2432"/>
    <property type="match status" value="1"/>
</dbReference>
<dbReference type="Pfam" id="PF06949">
    <property type="entry name" value="DUF1292"/>
    <property type="match status" value="1"/>
</dbReference>
<evidence type="ECO:0000255" key="1">
    <source>
        <dbReference type="HAMAP-Rule" id="MF_01448"/>
    </source>
</evidence>
<comment type="similarity">
    <text evidence="1">Belongs to the UPF0473 family.</text>
</comment>